<comment type="function">
    <text evidence="5">Binds tRNA and catalyzes the iron and alpha-ketoglutarate dependent hydroxylation of 5-methylcarboxymethyl uridine at the wobble position of the anticodon loop in tRNA via its dioxygenase domain, giving rise to 5-(S)-methoxycarbonylhydroxymethyluridine.</text>
</comment>
<comment type="cofactor">
    <cofactor evidence="3">
        <name>Fe(2+)</name>
        <dbReference type="ChEBI" id="CHEBI:29033"/>
    </cofactor>
    <text evidence="3">Binds 1 Fe(2+) ion per subunit.</text>
</comment>
<comment type="alternative products">
    <event type="alternative splicing"/>
    <isoform>
        <id>Q8RWY1-1</id>
        <name>1</name>
        <sequence type="displayed"/>
    </isoform>
    <isoform>
        <id>Q8RWY1-2</id>
        <name>2</name>
        <sequence type="described" ref="VSP_059310"/>
    </isoform>
</comment>
<comment type="miscellaneous">
    <molecule>Isoform 2</molecule>
    <text evidence="8">Arabidopsis ALKB8 isoform 2 has an extension of 83 amino acids in its N-terminus, but this extension shares no detectable sequence homology with other plant orthologs. The 159 nucleotide DNA sequence encoding the N-terminal part (53 amino acids) of the 83 amino acid extension is highly similar (94% sequence identity) to the Ac-type transposon Tag2.</text>
</comment>
<comment type="similarity">
    <text evidence="7">Belongs to the alkB family.</text>
</comment>
<comment type="caution">
    <text evidence="8">Arabidopsis ALKB8 isoform 2 has an extension of 83 amino acids in its N-terminus, but this extension shares no detectable sequence homology with other plant orthologs. The 159 nucleotide DNA sequence encoding the N-terminal part (53 amino acids) of the 83 amino acid extension is highly similar (94% sequence identity) to the Ac-type transposon Tag2.</text>
</comment>
<comment type="sequence caution" evidence="7">
    <conflict type="erroneous gene model prediction">
        <sequence resource="EMBL-CDS" id="AAG60147"/>
    </conflict>
</comment>
<gene>
    <name evidence="6" type="primary">ALKBH8</name>
    <name evidence="9" type="ordered locus">At1g31600</name>
    <name evidence="10" type="ORF">F27M3_19</name>
</gene>
<feature type="chain" id="PRO_0000443080" description="Alkylated DNA repair protein ALKBH8 homolog">
    <location>
        <begin position="1"/>
        <end position="346"/>
    </location>
</feature>
<feature type="domain" description="RRM" evidence="2">
    <location>
        <begin position="24"/>
        <end position="102"/>
    </location>
</feature>
<feature type="domain" description="Fe2OG dioxygenase" evidence="3">
    <location>
        <begin position="208"/>
        <end position="328"/>
    </location>
</feature>
<feature type="region of interest" description="Disordered" evidence="4">
    <location>
        <begin position="1"/>
        <end position="21"/>
    </location>
</feature>
<feature type="compositionally biased region" description="Low complexity" evidence="4">
    <location>
        <begin position="12"/>
        <end position="21"/>
    </location>
</feature>
<feature type="binding site" evidence="3">
    <location>
        <position position="226"/>
    </location>
    <ligand>
        <name>Fe cation</name>
        <dbReference type="ChEBI" id="CHEBI:24875"/>
    </ligand>
</feature>
<feature type="binding site" evidence="3">
    <location>
        <position position="228"/>
    </location>
    <ligand>
        <name>Fe cation</name>
        <dbReference type="ChEBI" id="CHEBI:24875"/>
    </ligand>
</feature>
<feature type="binding site" evidence="7">
    <location>
        <position position="298"/>
    </location>
    <ligand>
        <name>Fe cation</name>
        <dbReference type="ChEBI" id="CHEBI:24875"/>
    </ligand>
</feature>
<feature type="binding site" evidence="3">
    <location>
        <position position="319"/>
    </location>
    <ligand>
        <name>2-oxoglutarate</name>
        <dbReference type="ChEBI" id="CHEBI:16810"/>
    </ligand>
</feature>
<feature type="binding site" evidence="1">
    <location>
        <position position="325"/>
    </location>
    <ligand>
        <name>2-oxoglutarate</name>
        <dbReference type="ChEBI" id="CHEBI:16810"/>
    </ligand>
</feature>
<feature type="splice variant" id="VSP_059310" description="In isoform 2.">
    <original>M</original>
    <variation>MGWPWADHWTMVLNGLGQIFRPLSIKDQPLEPMKKMFQVDMTIGLWTAQLTLLTQVNVIVFFIEHIGEDTSPLYDRRKLQSFIPRM</variation>
    <location>
        <position position="1"/>
    </location>
</feature>
<feature type="sequence conflict" description="In Ref. 4; BAD93744." evidence="7" ref="4">
    <original>D</original>
    <variation>E</variation>
    <location>
        <position position="59"/>
    </location>
</feature>
<feature type="sequence conflict" description="In Ref. 4; BAD93744." evidence="7" ref="4">
    <original>I</original>
    <variation>V</variation>
    <location>
        <position position="237"/>
    </location>
</feature>
<name>ALKB8_ARATH</name>
<proteinExistence type="evidence at transcript level"/>
<keyword id="KW-0025">Alternative splicing</keyword>
<keyword id="KW-0223">Dioxygenase</keyword>
<keyword id="KW-0408">Iron</keyword>
<keyword id="KW-0479">Metal-binding</keyword>
<keyword id="KW-0560">Oxidoreductase</keyword>
<keyword id="KW-1185">Reference proteome</keyword>
<keyword id="KW-0694">RNA-binding</keyword>
<organism>
    <name type="scientific">Arabidopsis thaliana</name>
    <name type="common">Mouse-ear cress</name>
    <dbReference type="NCBI Taxonomy" id="3702"/>
    <lineage>
        <taxon>Eukaryota</taxon>
        <taxon>Viridiplantae</taxon>
        <taxon>Streptophyta</taxon>
        <taxon>Embryophyta</taxon>
        <taxon>Tracheophyta</taxon>
        <taxon>Spermatophyta</taxon>
        <taxon>Magnoliopsida</taxon>
        <taxon>eudicotyledons</taxon>
        <taxon>Gunneridae</taxon>
        <taxon>Pentapetalae</taxon>
        <taxon>rosids</taxon>
        <taxon>malvids</taxon>
        <taxon>Brassicales</taxon>
        <taxon>Brassicaceae</taxon>
        <taxon>Camelineae</taxon>
        <taxon>Arabidopsis</taxon>
    </lineage>
</organism>
<dbReference type="EC" id="1.14.11.-" evidence="7"/>
<dbReference type="EMBL" id="AC074360">
    <property type="protein sequence ID" value="AAG60147.1"/>
    <property type="status" value="ALT_SEQ"/>
    <property type="molecule type" value="Genomic_DNA"/>
</dbReference>
<dbReference type="EMBL" id="CP002684">
    <property type="protein sequence ID" value="AEE31374.1"/>
    <property type="molecule type" value="Genomic_DNA"/>
</dbReference>
<dbReference type="EMBL" id="CP002684">
    <property type="protein sequence ID" value="AEE31376.1"/>
    <property type="molecule type" value="Genomic_DNA"/>
</dbReference>
<dbReference type="EMBL" id="CP002684">
    <property type="protein sequence ID" value="ANM60042.1"/>
    <property type="molecule type" value="Genomic_DNA"/>
</dbReference>
<dbReference type="EMBL" id="AY091033">
    <property type="protein sequence ID" value="AAM13854.1"/>
    <property type="molecule type" value="mRNA"/>
</dbReference>
<dbReference type="EMBL" id="AY133725">
    <property type="protein sequence ID" value="AAM91659.1"/>
    <property type="molecule type" value="mRNA"/>
</dbReference>
<dbReference type="EMBL" id="AK221205">
    <property type="protein sequence ID" value="BAD93744.1"/>
    <property type="molecule type" value="mRNA"/>
</dbReference>
<dbReference type="RefSeq" id="NP_001322355.1">
    <molecule id="Q8RWY1-1"/>
    <property type="nucleotide sequence ID" value="NM_001332970.1"/>
</dbReference>
<dbReference type="RefSeq" id="NP_174442.2">
    <molecule id="Q8RWY1-2"/>
    <property type="nucleotide sequence ID" value="NM_102896.3"/>
</dbReference>
<dbReference type="RefSeq" id="NP_973946.1">
    <molecule id="Q8RWY1-2"/>
    <property type="nucleotide sequence ID" value="NM_202217.1"/>
</dbReference>
<dbReference type="SMR" id="Q8RWY1"/>
<dbReference type="FunCoup" id="Q8RWY1">
    <property type="interactions" value="3569"/>
</dbReference>
<dbReference type="STRING" id="3702.Q8RWY1"/>
<dbReference type="PaxDb" id="3702-AT1G31600.1"/>
<dbReference type="EnsemblPlants" id="AT1G31600.1">
    <molecule id="Q8RWY1-2"/>
    <property type="protein sequence ID" value="AT1G31600.1"/>
    <property type="gene ID" value="AT1G31600"/>
</dbReference>
<dbReference type="EnsemblPlants" id="AT1G31600.3">
    <molecule id="Q8RWY1-2"/>
    <property type="protein sequence ID" value="AT1G31600.3"/>
    <property type="gene ID" value="AT1G31600"/>
</dbReference>
<dbReference type="EnsemblPlants" id="AT1G31600.4">
    <molecule id="Q8RWY1-1"/>
    <property type="protein sequence ID" value="AT1G31600.4"/>
    <property type="gene ID" value="AT1G31600"/>
</dbReference>
<dbReference type="GeneID" id="840048"/>
<dbReference type="Gramene" id="AT1G31600.1">
    <molecule id="Q8RWY1-2"/>
    <property type="protein sequence ID" value="AT1G31600.1"/>
    <property type="gene ID" value="AT1G31600"/>
</dbReference>
<dbReference type="Gramene" id="AT1G31600.3">
    <molecule id="Q8RWY1-2"/>
    <property type="protein sequence ID" value="AT1G31600.3"/>
    <property type="gene ID" value="AT1G31600"/>
</dbReference>
<dbReference type="Gramene" id="AT1G31600.4">
    <molecule id="Q8RWY1-1"/>
    <property type="protein sequence ID" value="AT1G31600.4"/>
    <property type="gene ID" value="AT1G31600"/>
</dbReference>
<dbReference type="KEGG" id="ath:AT1G31600"/>
<dbReference type="Araport" id="AT1G31600"/>
<dbReference type="TAIR" id="AT1G31600">
    <property type="gene designation" value="TRM9"/>
</dbReference>
<dbReference type="eggNOG" id="KOG4176">
    <property type="taxonomic scope" value="Eukaryota"/>
</dbReference>
<dbReference type="InParanoid" id="Q8RWY1"/>
<dbReference type="OMA" id="RNVNTRH"/>
<dbReference type="PhylomeDB" id="Q8RWY1"/>
<dbReference type="PRO" id="PR:Q8RWY1"/>
<dbReference type="Proteomes" id="UP000006548">
    <property type="component" value="Chromosome 1"/>
</dbReference>
<dbReference type="ExpressionAtlas" id="Q8RWY1">
    <property type="expression patterns" value="baseline and differential"/>
</dbReference>
<dbReference type="GO" id="GO:0051213">
    <property type="term" value="F:dioxygenase activity"/>
    <property type="evidence" value="ECO:0007669"/>
    <property type="project" value="UniProtKB-KW"/>
</dbReference>
<dbReference type="GO" id="GO:0046872">
    <property type="term" value="F:metal ion binding"/>
    <property type="evidence" value="ECO:0007669"/>
    <property type="project" value="UniProtKB-KW"/>
</dbReference>
<dbReference type="GO" id="GO:0003723">
    <property type="term" value="F:RNA binding"/>
    <property type="evidence" value="ECO:0007669"/>
    <property type="project" value="UniProtKB-KW"/>
</dbReference>
<dbReference type="GO" id="GO:0070988">
    <property type="term" value="P:demethylation"/>
    <property type="evidence" value="ECO:0007669"/>
    <property type="project" value="InterPro"/>
</dbReference>
<dbReference type="GO" id="GO:0002098">
    <property type="term" value="P:tRNA wobble uridine modification"/>
    <property type="evidence" value="ECO:0000315"/>
    <property type="project" value="TAIR"/>
</dbReference>
<dbReference type="FunFam" id="2.60.120.590:FF:000018">
    <property type="entry name" value="ALKylated DNA repair protein AlkB homolog"/>
    <property type="match status" value="1"/>
</dbReference>
<dbReference type="FunFam" id="3.30.70.330:FF:001453">
    <property type="entry name" value="Nucleic acid binding protein"/>
    <property type="match status" value="1"/>
</dbReference>
<dbReference type="Gene3D" id="3.30.70.330">
    <property type="match status" value="1"/>
</dbReference>
<dbReference type="Gene3D" id="2.60.120.590">
    <property type="entry name" value="Alpha-ketoglutarate-dependent dioxygenase AlkB-like"/>
    <property type="match status" value="1"/>
</dbReference>
<dbReference type="InterPro" id="IPR027450">
    <property type="entry name" value="AlkB-like"/>
</dbReference>
<dbReference type="InterPro" id="IPR037151">
    <property type="entry name" value="AlkB-like_sf"/>
</dbReference>
<dbReference type="InterPro" id="IPR032857">
    <property type="entry name" value="ALKBH4"/>
</dbReference>
<dbReference type="InterPro" id="IPR012677">
    <property type="entry name" value="Nucleotide-bd_a/b_plait_sf"/>
</dbReference>
<dbReference type="InterPro" id="IPR005123">
    <property type="entry name" value="Oxoglu/Fe-dep_dioxygenase_dom"/>
</dbReference>
<dbReference type="InterPro" id="IPR035979">
    <property type="entry name" value="RBD_domain_sf"/>
</dbReference>
<dbReference type="InterPro" id="IPR000504">
    <property type="entry name" value="RRM_dom"/>
</dbReference>
<dbReference type="PANTHER" id="PTHR12463:SF1">
    <property type="entry name" value="2-OXOGLUTARATE AND FE-DEPENDENT OXYGENASE FAMILY PROTEIN"/>
    <property type="match status" value="1"/>
</dbReference>
<dbReference type="PANTHER" id="PTHR12463">
    <property type="entry name" value="OXYGENASE-RELATED"/>
    <property type="match status" value="1"/>
</dbReference>
<dbReference type="Pfam" id="PF13532">
    <property type="entry name" value="2OG-FeII_Oxy_2"/>
    <property type="match status" value="1"/>
</dbReference>
<dbReference type="SUPFAM" id="SSF51197">
    <property type="entry name" value="Clavaminate synthase-like"/>
    <property type="match status" value="1"/>
</dbReference>
<dbReference type="SUPFAM" id="SSF54928">
    <property type="entry name" value="RNA-binding domain, RBD"/>
    <property type="match status" value="1"/>
</dbReference>
<dbReference type="PROSITE" id="PS51471">
    <property type="entry name" value="FE2OG_OXY"/>
    <property type="match status" value="1"/>
</dbReference>
<dbReference type="PROSITE" id="PS50102">
    <property type="entry name" value="RRM"/>
    <property type="match status" value="1"/>
</dbReference>
<reference key="1">
    <citation type="journal article" date="2000" name="Nature">
        <title>Sequence and analysis of chromosome 1 of the plant Arabidopsis thaliana.</title>
        <authorList>
            <person name="Theologis A."/>
            <person name="Ecker J.R."/>
            <person name="Palm C.J."/>
            <person name="Federspiel N.A."/>
            <person name="Kaul S."/>
            <person name="White O."/>
            <person name="Alonso J."/>
            <person name="Altafi H."/>
            <person name="Araujo R."/>
            <person name="Bowman C.L."/>
            <person name="Brooks S.Y."/>
            <person name="Buehler E."/>
            <person name="Chan A."/>
            <person name="Chao Q."/>
            <person name="Chen H."/>
            <person name="Cheuk R.F."/>
            <person name="Chin C.W."/>
            <person name="Chung M.K."/>
            <person name="Conn L."/>
            <person name="Conway A.B."/>
            <person name="Conway A.R."/>
            <person name="Creasy T.H."/>
            <person name="Dewar K."/>
            <person name="Dunn P."/>
            <person name="Etgu P."/>
            <person name="Feldblyum T.V."/>
            <person name="Feng J.-D."/>
            <person name="Fong B."/>
            <person name="Fujii C.Y."/>
            <person name="Gill J.E."/>
            <person name="Goldsmith A.D."/>
            <person name="Haas B."/>
            <person name="Hansen N.F."/>
            <person name="Hughes B."/>
            <person name="Huizar L."/>
            <person name="Hunter J.L."/>
            <person name="Jenkins J."/>
            <person name="Johnson-Hopson C."/>
            <person name="Khan S."/>
            <person name="Khaykin E."/>
            <person name="Kim C.J."/>
            <person name="Koo H.L."/>
            <person name="Kremenetskaia I."/>
            <person name="Kurtz D.B."/>
            <person name="Kwan A."/>
            <person name="Lam B."/>
            <person name="Langin-Hooper S."/>
            <person name="Lee A."/>
            <person name="Lee J.M."/>
            <person name="Lenz C.A."/>
            <person name="Li J.H."/>
            <person name="Li Y.-P."/>
            <person name="Lin X."/>
            <person name="Liu S.X."/>
            <person name="Liu Z.A."/>
            <person name="Luros J.S."/>
            <person name="Maiti R."/>
            <person name="Marziali A."/>
            <person name="Militscher J."/>
            <person name="Miranda M."/>
            <person name="Nguyen M."/>
            <person name="Nierman W.C."/>
            <person name="Osborne B.I."/>
            <person name="Pai G."/>
            <person name="Peterson J."/>
            <person name="Pham P.K."/>
            <person name="Rizzo M."/>
            <person name="Rooney T."/>
            <person name="Rowley D."/>
            <person name="Sakano H."/>
            <person name="Salzberg S.L."/>
            <person name="Schwartz J.R."/>
            <person name="Shinn P."/>
            <person name="Southwick A.M."/>
            <person name="Sun H."/>
            <person name="Tallon L.J."/>
            <person name="Tambunga G."/>
            <person name="Toriumi M.J."/>
            <person name="Town C.D."/>
            <person name="Utterback T."/>
            <person name="Van Aken S."/>
            <person name="Vaysberg M."/>
            <person name="Vysotskaia V.S."/>
            <person name="Walker M."/>
            <person name="Wu D."/>
            <person name="Yu G."/>
            <person name="Fraser C.M."/>
            <person name="Venter J.C."/>
            <person name="Davis R.W."/>
        </authorList>
    </citation>
    <scope>NUCLEOTIDE SEQUENCE [LARGE SCALE GENOMIC DNA]</scope>
    <source>
        <strain>cv. Columbia</strain>
    </source>
</reference>
<reference key="2">
    <citation type="journal article" date="2017" name="Plant J.">
        <title>Araport11: a complete reannotation of the Arabidopsis thaliana reference genome.</title>
        <authorList>
            <person name="Cheng C.Y."/>
            <person name="Krishnakumar V."/>
            <person name="Chan A.P."/>
            <person name="Thibaud-Nissen F."/>
            <person name="Schobel S."/>
            <person name="Town C.D."/>
        </authorList>
    </citation>
    <scope>GENOME REANNOTATION</scope>
    <source>
        <strain>cv. Columbia</strain>
    </source>
</reference>
<reference key="3">
    <citation type="journal article" date="2003" name="Science">
        <title>Empirical analysis of transcriptional activity in the Arabidopsis genome.</title>
        <authorList>
            <person name="Yamada K."/>
            <person name="Lim J."/>
            <person name="Dale J.M."/>
            <person name="Chen H."/>
            <person name="Shinn P."/>
            <person name="Palm C.J."/>
            <person name="Southwick A.M."/>
            <person name="Wu H.C."/>
            <person name="Kim C.J."/>
            <person name="Nguyen M."/>
            <person name="Pham P.K."/>
            <person name="Cheuk R.F."/>
            <person name="Karlin-Newmann G."/>
            <person name="Liu S.X."/>
            <person name="Lam B."/>
            <person name="Sakano H."/>
            <person name="Wu T."/>
            <person name="Yu G."/>
            <person name="Miranda M."/>
            <person name="Quach H.L."/>
            <person name="Tripp M."/>
            <person name="Chang C.H."/>
            <person name="Lee J.M."/>
            <person name="Toriumi M.J."/>
            <person name="Chan M.M."/>
            <person name="Tang C.C."/>
            <person name="Onodera C.S."/>
            <person name="Deng J.M."/>
            <person name="Akiyama K."/>
            <person name="Ansari Y."/>
            <person name="Arakawa T."/>
            <person name="Banh J."/>
            <person name="Banno F."/>
            <person name="Bowser L."/>
            <person name="Brooks S.Y."/>
            <person name="Carninci P."/>
            <person name="Chao Q."/>
            <person name="Choy N."/>
            <person name="Enju A."/>
            <person name="Goldsmith A.D."/>
            <person name="Gurjal M."/>
            <person name="Hansen N.F."/>
            <person name="Hayashizaki Y."/>
            <person name="Johnson-Hopson C."/>
            <person name="Hsuan V.W."/>
            <person name="Iida K."/>
            <person name="Karnes M."/>
            <person name="Khan S."/>
            <person name="Koesema E."/>
            <person name="Ishida J."/>
            <person name="Jiang P.X."/>
            <person name="Jones T."/>
            <person name="Kawai J."/>
            <person name="Kamiya A."/>
            <person name="Meyers C."/>
            <person name="Nakajima M."/>
            <person name="Narusaka M."/>
            <person name="Seki M."/>
            <person name="Sakurai T."/>
            <person name="Satou M."/>
            <person name="Tamse R."/>
            <person name="Vaysberg M."/>
            <person name="Wallender E.K."/>
            <person name="Wong C."/>
            <person name="Yamamura Y."/>
            <person name="Yuan S."/>
            <person name="Shinozaki K."/>
            <person name="Davis R.W."/>
            <person name="Theologis A."/>
            <person name="Ecker J.R."/>
        </authorList>
    </citation>
    <scope>NUCLEOTIDE SEQUENCE [LARGE SCALE MRNA] (ISOFORM 2)</scope>
    <source>
        <strain>cv. Columbia</strain>
    </source>
</reference>
<reference key="4">
    <citation type="submission" date="2005-03" db="EMBL/GenBank/DDBJ databases">
        <title>Large-scale analysis of RIKEN Arabidopsis full-length (RAFL) cDNAs.</title>
        <authorList>
            <person name="Totoki Y."/>
            <person name="Seki M."/>
            <person name="Ishida J."/>
            <person name="Nakajima M."/>
            <person name="Enju A."/>
            <person name="Kamiya A."/>
            <person name="Narusaka M."/>
            <person name="Shin-i T."/>
            <person name="Nakagawa M."/>
            <person name="Sakamoto N."/>
            <person name="Oishi K."/>
            <person name="Kohara Y."/>
            <person name="Kobayashi M."/>
            <person name="Toyoda A."/>
            <person name="Sakaki Y."/>
            <person name="Sakurai T."/>
            <person name="Iida K."/>
            <person name="Akiyama K."/>
            <person name="Satou M."/>
            <person name="Toyoda T."/>
            <person name="Konagaya A."/>
            <person name="Carninci P."/>
            <person name="Kawai J."/>
            <person name="Hayashizaki Y."/>
            <person name="Shinozaki K."/>
        </authorList>
    </citation>
    <scope>NUCLEOTIDE SEQUENCE [LARGE SCALE MRNA] (ISOFORM 2)</scope>
    <source>
        <strain>cv. Columbia</strain>
    </source>
</reference>
<reference key="5">
    <citation type="journal article" date="2011" name="Nucleic Acids Res.">
        <title>Roles of Trm9- and ALKBH8-like proteins in the formation of modified wobble uridines in Arabidopsis tRNA.</title>
        <authorList>
            <person name="Leihne V."/>
            <person name="Kirpekar F."/>
            <person name="Vaagboe C.B."/>
            <person name="van den Born E."/>
            <person name="Krokan H.E."/>
            <person name="Grini P.E."/>
            <person name="Meza T.J."/>
            <person name="Falnes P.O."/>
        </authorList>
    </citation>
    <scope>FUNCTION</scope>
    <scope>ALTERNATIVE SPLICING</scope>
</reference>
<sequence length="346" mass="38424">MVQPRFVRPTQSSPSSISGEPNSSNLYVANCGPAVGLTHNAIAAVFAEFGEVNGVYAADDSGVRVIVSFADPFSAKAALEALSGRPCPDLKGRSLHIRYSVLQLPSETQVNDCVPVSLIDSELNIPGLFLLPDFVTVAEEQQLLAAVDARHWIGLAKRRVQHYGYEFCYGTRNVDTKKRLGELPSFVSPILERIYLFPNFDNGSASLNLDQLTVNEYPSGVGLSPHIDTHSAFEDCIFSLSLAGPCIMEFRRYSVSTWKASTTDAEKSGDSSCIKKALYLPPRSMLLLSGEARYAWNHYIPHHKIDKVKDKVIRRSSRRVSFTLRKVRNHPCSCKYPQYCDSQQQM</sequence>
<accession>Q8RWY1</accession>
<accession>A0A1P8ATR1</accession>
<accession>Q56YW5</accession>
<accession>Q9C6V1</accession>
<evidence type="ECO:0000250" key="1">
    <source>
        <dbReference type="UniProtKB" id="Q96BT7"/>
    </source>
</evidence>
<evidence type="ECO:0000255" key="2">
    <source>
        <dbReference type="PROSITE-ProRule" id="PRU00176"/>
    </source>
</evidence>
<evidence type="ECO:0000255" key="3">
    <source>
        <dbReference type="PROSITE-ProRule" id="PRU00805"/>
    </source>
</evidence>
<evidence type="ECO:0000256" key="4">
    <source>
        <dbReference type="SAM" id="MobiDB-lite"/>
    </source>
</evidence>
<evidence type="ECO:0000269" key="5">
    <source>
    </source>
</evidence>
<evidence type="ECO:0000303" key="6">
    <source>
    </source>
</evidence>
<evidence type="ECO:0000305" key="7"/>
<evidence type="ECO:0000305" key="8">
    <source>
    </source>
</evidence>
<evidence type="ECO:0000312" key="9">
    <source>
        <dbReference type="Araport" id="AT1G31600"/>
    </source>
</evidence>
<evidence type="ECO:0000312" key="10">
    <source>
        <dbReference type="EMBL" id="AAG60147.1"/>
    </source>
</evidence>
<protein>
    <recommendedName>
        <fullName evidence="7">Alkylated DNA repair protein ALKBH8 homolog</fullName>
        <ecNumber evidence="7">1.14.11.-</ecNumber>
    </recommendedName>
    <alternativeName>
        <fullName evidence="7">Alpha-ketoglutarate-dependent dioxygenase ALKBH8 homolog</fullName>
        <shortName evidence="6">AtALKBH8</shortName>
    </alternativeName>
</protein>